<evidence type="ECO:0000255" key="1">
    <source>
        <dbReference type="HAMAP-Rule" id="MF_00075"/>
    </source>
</evidence>
<evidence type="ECO:0007829" key="2">
    <source>
        <dbReference type="PDB" id="3I4O"/>
    </source>
</evidence>
<organism>
    <name type="scientific">Mycobacterium tuberculosis (strain ATCC 25618 / H37Rv)</name>
    <dbReference type="NCBI Taxonomy" id="83332"/>
    <lineage>
        <taxon>Bacteria</taxon>
        <taxon>Bacillati</taxon>
        <taxon>Actinomycetota</taxon>
        <taxon>Actinomycetes</taxon>
        <taxon>Mycobacteriales</taxon>
        <taxon>Mycobacteriaceae</taxon>
        <taxon>Mycobacterium</taxon>
        <taxon>Mycobacterium tuberculosis complex</taxon>
    </lineage>
</organism>
<sequence>MAKKDGAIEVEGRVVEPLPNAMFRIELENGHKVLAHISGKMRQHYIRILPEDRVVVELSPYDLSRGRIVYRYK</sequence>
<keyword id="KW-0002">3D-structure</keyword>
<keyword id="KW-0963">Cytoplasm</keyword>
<keyword id="KW-0396">Initiation factor</keyword>
<keyword id="KW-0648">Protein biosynthesis</keyword>
<keyword id="KW-1185">Reference proteome</keyword>
<keyword id="KW-0694">RNA-binding</keyword>
<keyword id="KW-0699">rRNA-binding</keyword>
<dbReference type="EMBL" id="AL123456">
    <property type="protein sequence ID" value="CCP46284.1"/>
    <property type="molecule type" value="Genomic_DNA"/>
</dbReference>
<dbReference type="PIR" id="C70566">
    <property type="entry name" value="C70566"/>
</dbReference>
<dbReference type="RefSeq" id="NP_217979.1">
    <property type="nucleotide sequence ID" value="NC_000962.3"/>
</dbReference>
<dbReference type="RefSeq" id="WP_003418601.1">
    <property type="nucleotide sequence ID" value="NZ_NVQJ01000091.1"/>
</dbReference>
<dbReference type="PDB" id="3I4O">
    <property type="method" value="X-ray"/>
    <property type="resolution" value="1.47 A"/>
    <property type="chains" value="A/B=1-73"/>
</dbReference>
<dbReference type="PDBsum" id="3I4O"/>
<dbReference type="SMR" id="P9WKK3"/>
<dbReference type="FunCoup" id="P9WKK3">
    <property type="interactions" value="64"/>
</dbReference>
<dbReference type="STRING" id="83332.Rv3462c"/>
<dbReference type="PaxDb" id="83332-Rv3462c"/>
<dbReference type="DNASU" id="887325"/>
<dbReference type="GeneID" id="887325"/>
<dbReference type="GeneID" id="98799387"/>
<dbReference type="KEGG" id="mtu:Rv3462c"/>
<dbReference type="KEGG" id="mtv:RVBD_3462c"/>
<dbReference type="TubercuList" id="Rv3462c"/>
<dbReference type="eggNOG" id="COG0361">
    <property type="taxonomic scope" value="Bacteria"/>
</dbReference>
<dbReference type="InParanoid" id="P9WKK3"/>
<dbReference type="OrthoDB" id="9803250at2"/>
<dbReference type="PhylomeDB" id="P9WKK3"/>
<dbReference type="EvolutionaryTrace" id="P9WKK3"/>
<dbReference type="PRO" id="PR:P9WKK3"/>
<dbReference type="Proteomes" id="UP000001584">
    <property type="component" value="Chromosome"/>
</dbReference>
<dbReference type="GO" id="GO:0005829">
    <property type="term" value="C:cytosol"/>
    <property type="evidence" value="ECO:0000318"/>
    <property type="project" value="GO_Central"/>
</dbReference>
<dbReference type="GO" id="GO:0009274">
    <property type="term" value="C:peptidoglycan-based cell wall"/>
    <property type="evidence" value="ECO:0007005"/>
    <property type="project" value="MTBBASE"/>
</dbReference>
<dbReference type="GO" id="GO:0005886">
    <property type="term" value="C:plasma membrane"/>
    <property type="evidence" value="ECO:0007005"/>
    <property type="project" value="MTBBASE"/>
</dbReference>
<dbReference type="GO" id="GO:0043022">
    <property type="term" value="F:ribosome binding"/>
    <property type="evidence" value="ECO:0000318"/>
    <property type="project" value="GO_Central"/>
</dbReference>
<dbReference type="GO" id="GO:0019843">
    <property type="term" value="F:rRNA binding"/>
    <property type="evidence" value="ECO:0007669"/>
    <property type="project" value="UniProtKB-UniRule"/>
</dbReference>
<dbReference type="GO" id="GO:0003743">
    <property type="term" value="F:translation initiation factor activity"/>
    <property type="evidence" value="ECO:0007669"/>
    <property type="project" value="UniProtKB-UniRule"/>
</dbReference>
<dbReference type="CDD" id="cd04451">
    <property type="entry name" value="S1_IF1"/>
    <property type="match status" value="1"/>
</dbReference>
<dbReference type="FunFam" id="2.40.50.140:FF:000002">
    <property type="entry name" value="Translation initiation factor IF-1"/>
    <property type="match status" value="1"/>
</dbReference>
<dbReference type="Gene3D" id="2.40.50.140">
    <property type="entry name" value="Nucleic acid-binding proteins"/>
    <property type="match status" value="1"/>
</dbReference>
<dbReference type="HAMAP" id="MF_00075">
    <property type="entry name" value="IF_1"/>
    <property type="match status" value="1"/>
</dbReference>
<dbReference type="InterPro" id="IPR012340">
    <property type="entry name" value="NA-bd_OB-fold"/>
</dbReference>
<dbReference type="InterPro" id="IPR006196">
    <property type="entry name" value="RNA-binding_domain_S1_IF1"/>
</dbReference>
<dbReference type="InterPro" id="IPR004368">
    <property type="entry name" value="TIF_IF1"/>
</dbReference>
<dbReference type="NCBIfam" id="TIGR00008">
    <property type="entry name" value="infA"/>
    <property type="match status" value="1"/>
</dbReference>
<dbReference type="PANTHER" id="PTHR33370">
    <property type="entry name" value="TRANSLATION INITIATION FACTOR IF-1, CHLOROPLASTIC"/>
    <property type="match status" value="1"/>
</dbReference>
<dbReference type="PANTHER" id="PTHR33370:SF1">
    <property type="entry name" value="TRANSLATION INITIATION FACTOR IF-1, CHLOROPLASTIC"/>
    <property type="match status" value="1"/>
</dbReference>
<dbReference type="Pfam" id="PF01176">
    <property type="entry name" value="eIF-1a"/>
    <property type="match status" value="1"/>
</dbReference>
<dbReference type="SUPFAM" id="SSF50249">
    <property type="entry name" value="Nucleic acid-binding proteins"/>
    <property type="match status" value="1"/>
</dbReference>
<dbReference type="PROSITE" id="PS50832">
    <property type="entry name" value="S1_IF1_TYPE"/>
    <property type="match status" value="1"/>
</dbReference>
<protein>
    <recommendedName>
        <fullName evidence="1">Translation initiation factor IF-1</fullName>
    </recommendedName>
</protein>
<proteinExistence type="evidence at protein level"/>
<reference key="1">
    <citation type="journal article" date="1998" name="Nature">
        <title>Deciphering the biology of Mycobacterium tuberculosis from the complete genome sequence.</title>
        <authorList>
            <person name="Cole S.T."/>
            <person name="Brosch R."/>
            <person name="Parkhill J."/>
            <person name="Garnier T."/>
            <person name="Churcher C.M."/>
            <person name="Harris D.E."/>
            <person name="Gordon S.V."/>
            <person name="Eiglmeier K."/>
            <person name="Gas S."/>
            <person name="Barry C.E. III"/>
            <person name="Tekaia F."/>
            <person name="Badcock K."/>
            <person name="Basham D."/>
            <person name="Brown D."/>
            <person name="Chillingworth T."/>
            <person name="Connor R."/>
            <person name="Davies R.M."/>
            <person name="Devlin K."/>
            <person name="Feltwell T."/>
            <person name="Gentles S."/>
            <person name="Hamlin N."/>
            <person name="Holroyd S."/>
            <person name="Hornsby T."/>
            <person name="Jagels K."/>
            <person name="Krogh A."/>
            <person name="McLean J."/>
            <person name="Moule S."/>
            <person name="Murphy L.D."/>
            <person name="Oliver S."/>
            <person name="Osborne J."/>
            <person name="Quail M.A."/>
            <person name="Rajandream M.A."/>
            <person name="Rogers J."/>
            <person name="Rutter S."/>
            <person name="Seeger K."/>
            <person name="Skelton S."/>
            <person name="Squares S."/>
            <person name="Squares R."/>
            <person name="Sulston J.E."/>
            <person name="Taylor K."/>
            <person name="Whitehead S."/>
            <person name="Barrell B.G."/>
        </authorList>
    </citation>
    <scope>NUCLEOTIDE SEQUENCE [LARGE SCALE GENOMIC DNA]</scope>
    <source>
        <strain>ATCC 25618 / H37Rv</strain>
    </source>
</reference>
<reference key="2">
    <citation type="journal article" date="2011" name="Mol. Cell. Proteomics">
        <title>Proteogenomic analysis of Mycobacterium tuberculosis by high resolution mass spectrometry.</title>
        <authorList>
            <person name="Kelkar D.S."/>
            <person name="Kumar D."/>
            <person name="Kumar P."/>
            <person name="Balakrishnan L."/>
            <person name="Muthusamy B."/>
            <person name="Yadav A.K."/>
            <person name="Shrivastava P."/>
            <person name="Marimuthu A."/>
            <person name="Anand S."/>
            <person name="Sundaram H."/>
            <person name="Kingsbury R."/>
            <person name="Harsha H.C."/>
            <person name="Nair B."/>
            <person name="Prasad T.S."/>
            <person name="Chauhan D.S."/>
            <person name="Katoch K."/>
            <person name="Katoch V.M."/>
            <person name="Kumar P."/>
            <person name="Chaerkady R."/>
            <person name="Ramachandran S."/>
            <person name="Dash D."/>
            <person name="Pandey A."/>
        </authorList>
    </citation>
    <scope>IDENTIFICATION BY MASS SPECTROMETRY [LARGE SCALE ANALYSIS]</scope>
    <source>
        <strain>ATCC 25618 / H37Rv</strain>
    </source>
</reference>
<reference key="3">
    <citation type="journal article" date="2010" name="FEBS Lett.">
        <title>Structure of translation initiation factor 1 from Mycobacterium tuberculosis and inferred binding to the 30S ribosomal subunit.</title>
        <authorList>
            <person name="Hatzopoulos G.N."/>
            <person name="Mueller-Dieckmann J."/>
        </authorList>
    </citation>
    <scope>X-RAY CRYSTALLOGRAPHY (1.47 ANGSTROMS)</scope>
    <source>
        <strain>ATCC 25618 / H37Rv</strain>
    </source>
</reference>
<name>IF1_MYCTU</name>
<comment type="function">
    <text evidence="1">One of the essential components for the initiation of protein synthesis. Stabilizes the binding of IF-2 and IF-3 on the 30S subunit to which N-formylmethionyl-tRNA(fMet) subsequently binds. Helps modulate mRNA selection, yielding the 30S pre-initiation complex (PIC). Upon addition of the 50S ribosomal subunit IF-1, IF-2 and IF-3 are released leaving the mature 70S translation initiation complex.</text>
</comment>
<comment type="subunit">
    <text evidence="1">Component of the 30S ribosomal translation pre-initiation complex which assembles on the 30S ribosome in the order IF-2 and IF-3, IF-1 and N-formylmethionyl-tRNA(fMet); mRNA recruitment can occur at any time during PIC assembly.</text>
</comment>
<comment type="subcellular location">
    <subcellularLocation>
        <location evidence="1">Cytoplasm</location>
    </subcellularLocation>
</comment>
<comment type="similarity">
    <text evidence="1">Belongs to the IF-1 family.</text>
</comment>
<feature type="chain" id="PRO_0000095828" description="Translation initiation factor IF-1">
    <location>
        <begin position="1"/>
        <end position="73"/>
    </location>
</feature>
<feature type="domain" description="S1-like" evidence="1">
    <location>
        <begin position="1"/>
        <end position="73"/>
    </location>
</feature>
<feature type="strand" evidence="2">
    <location>
        <begin position="8"/>
        <end position="18"/>
    </location>
</feature>
<feature type="turn" evidence="2">
    <location>
        <begin position="19"/>
        <end position="21"/>
    </location>
</feature>
<feature type="strand" evidence="2">
    <location>
        <begin position="22"/>
        <end position="27"/>
    </location>
</feature>
<feature type="strand" evidence="2">
    <location>
        <begin position="32"/>
        <end position="37"/>
    </location>
</feature>
<feature type="helix" evidence="2">
    <location>
        <begin position="39"/>
        <end position="43"/>
    </location>
</feature>
<feature type="strand" evidence="2">
    <location>
        <begin position="53"/>
        <end position="59"/>
    </location>
</feature>
<feature type="strand" evidence="2">
    <location>
        <begin position="62"/>
        <end position="71"/>
    </location>
</feature>
<accession>P9WKK3</accession>
<accession>L0TCT8</accession>
<accession>P0A5H5</accession>
<accession>P45957</accession>
<gene>
    <name evidence="1" type="primary">infA</name>
    <name type="ordered locus">Rv3462c</name>
    <name type="ORF">MCB1222.32c</name>
    <name type="ORF">MTCY13E12.15c</name>
</gene>